<feature type="transit peptide" description="Mitochondrion" evidence="1">
    <location>
        <begin position="1"/>
        <end position="20"/>
    </location>
</feature>
<feature type="chain" id="PRO_0000035922" description="4-hydroxybenzoate polyprenyltransferase, mitochondrial" evidence="2">
    <location>
        <begin position="21"/>
        <end position="358"/>
    </location>
</feature>
<feature type="transmembrane region" description="Helical" evidence="2">
    <location>
        <begin position="76"/>
        <end position="96"/>
    </location>
</feature>
<feature type="transmembrane region" description="Helical" evidence="2">
    <location>
        <begin position="107"/>
        <end position="127"/>
    </location>
</feature>
<feature type="transmembrane region" description="Helical" evidence="2">
    <location>
        <begin position="154"/>
        <end position="174"/>
    </location>
</feature>
<feature type="transmembrane region" description="Helical" evidence="2">
    <location>
        <begin position="202"/>
        <end position="222"/>
    </location>
</feature>
<feature type="transmembrane region" description="Helical" evidence="2">
    <location>
        <begin position="229"/>
        <end position="249"/>
    </location>
</feature>
<feature type="transmembrane region" description="Helical" evidence="2">
    <location>
        <begin position="275"/>
        <end position="295"/>
    </location>
</feature>
<feature type="transmembrane region" description="Helical" evidence="2">
    <location>
        <begin position="336"/>
        <end position="356"/>
    </location>
</feature>
<reference key="1">
    <citation type="journal article" date="2000" name="J. Bacteriol.">
        <title>Phenotypes of fission yeast defective in ubiquinone production due to disruption of the gene for p-hydroxybenzoate polyprenyl diphosphate transferase.</title>
        <authorList>
            <person name="Uchida N."/>
            <person name="Suzuki K."/>
            <person name="Saiki R."/>
            <person name="Kainou T."/>
            <person name="Tanaka K."/>
            <person name="Matsuda H."/>
            <person name="Kawamukai M."/>
        </authorList>
    </citation>
    <scope>NUCLEOTIDE SEQUENCE [GENOMIC DNA]</scope>
    <scope>FUNCTION</scope>
    <scope>CATALYTIC ACTIVITY</scope>
    <scope>SUBCELLULAR LOCATION</scope>
</reference>
<reference key="2">
    <citation type="submission" date="2006-04" db="EMBL/GenBank/DDBJ databases">
        <authorList>
            <person name="Zhang D."/>
            <person name="Binaya S."/>
            <person name="Niu W."/>
            <person name="Tan T."/>
        </authorList>
    </citation>
    <scope>NUCLEOTIDE SEQUENCE [GENOMIC DNA]</scope>
    <source>
        <strain>SPQ-01</strain>
    </source>
</reference>
<reference key="3">
    <citation type="journal article" date="2002" name="Nature">
        <title>The genome sequence of Schizosaccharomyces pombe.</title>
        <authorList>
            <person name="Wood V."/>
            <person name="Gwilliam R."/>
            <person name="Rajandream M.A."/>
            <person name="Lyne M.H."/>
            <person name="Lyne R."/>
            <person name="Stewart A."/>
            <person name="Sgouros J.G."/>
            <person name="Peat N."/>
            <person name="Hayles J."/>
            <person name="Baker S.G."/>
            <person name="Basham D."/>
            <person name="Bowman S."/>
            <person name="Brooks K."/>
            <person name="Brown D."/>
            <person name="Brown S."/>
            <person name="Chillingworth T."/>
            <person name="Churcher C.M."/>
            <person name="Collins M."/>
            <person name="Connor R."/>
            <person name="Cronin A."/>
            <person name="Davis P."/>
            <person name="Feltwell T."/>
            <person name="Fraser A."/>
            <person name="Gentles S."/>
            <person name="Goble A."/>
            <person name="Hamlin N."/>
            <person name="Harris D.E."/>
            <person name="Hidalgo J."/>
            <person name="Hodgson G."/>
            <person name="Holroyd S."/>
            <person name="Hornsby T."/>
            <person name="Howarth S."/>
            <person name="Huckle E.J."/>
            <person name="Hunt S."/>
            <person name="Jagels K."/>
            <person name="James K.D."/>
            <person name="Jones L."/>
            <person name="Jones M."/>
            <person name="Leather S."/>
            <person name="McDonald S."/>
            <person name="McLean J."/>
            <person name="Mooney P."/>
            <person name="Moule S."/>
            <person name="Mungall K.L."/>
            <person name="Murphy L.D."/>
            <person name="Niblett D."/>
            <person name="Odell C."/>
            <person name="Oliver K."/>
            <person name="O'Neil S."/>
            <person name="Pearson D."/>
            <person name="Quail M.A."/>
            <person name="Rabbinowitsch E."/>
            <person name="Rutherford K.M."/>
            <person name="Rutter S."/>
            <person name="Saunders D."/>
            <person name="Seeger K."/>
            <person name="Sharp S."/>
            <person name="Skelton J."/>
            <person name="Simmonds M.N."/>
            <person name="Squares R."/>
            <person name="Squares S."/>
            <person name="Stevens K."/>
            <person name="Taylor K."/>
            <person name="Taylor R.G."/>
            <person name="Tivey A."/>
            <person name="Walsh S.V."/>
            <person name="Warren T."/>
            <person name="Whitehead S."/>
            <person name="Woodward J.R."/>
            <person name="Volckaert G."/>
            <person name="Aert R."/>
            <person name="Robben J."/>
            <person name="Grymonprez B."/>
            <person name="Weltjens I."/>
            <person name="Vanstreels E."/>
            <person name="Rieger M."/>
            <person name="Schaefer M."/>
            <person name="Mueller-Auer S."/>
            <person name="Gabel C."/>
            <person name="Fuchs M."/>
            <person name="Duesterhoeft A."/>
            <person name="Fritzc C."/>
            <person name="Holzer E."/>
            <person name="Moestl D."/>
            <person name="Hilbert H."/>
            <person name="Borzym K."/>
            <person name="Langer I."/>
            <person name="Beck A."/>
            <person name="Lehrach H."/>
            <person name="Reinhardt R."/>
            <person name="Pohl T.M."/>
            <person name="Eger P."/>
            <person name="Zimmermann W."/>
            <person name="Wedler H."/>
            <person name="Wambutt R."/>
            <person name="Purnelle B."/>
            <person name="Goffeau A."/>
            <person name="Cadieu E."/>
            <person name="Dreano S."/>
            <person name="Gloux S."/>
            <person name="Lelaure V."/>
            <person name="Mottier S."/>
            <person name="Galibert F."/>
            <person name="Aves S.J."/>
            <person name="Xiang Z."/>
            <person name="Hunt C."/>
            <person name="Moore K."/>
            <person name="Hurst S.M."/>
            <person name="Lucas M."/>
            <person name="Rochet M."/>
            <person name="Gaillardin C."/>
            <person name="Tallada V.A."/>
            <person name="Garzon A."/>
            <person name="Thode G."/>
            <person name="Daga R.R."/>
            <person name="Cruzado L."/>
            <person name="Jimenez J."/>
            <person name="Sanchez M."/>
            <person name="del Rey F."/>
            <person name="Benito J."/>
            <person name="Dominguez A."/>
            <person name="Revuelta J.L."/>
            <person name="Moreno S."/>
            <person name="Armstrong J."/>
            <person name="Forsburg S.L."/>
            <person name="Cerutti L."/>
            <person name="Lowe T."/>
            <person name="McCombie W.R."/>
            <person name="Paulsen I."/>
            <person name="Potashkin J."/>
            <person name="Shpakovski G.V."/>
            <person name="Ussery D."/>
            <person name="Barrell B.G."/>
            <person name="Nurse P."/>
        </authorList>
    </citation>
    <scope>NUCLEOTIDE SEQUENCE [LARGE SCALE GENOMIC DNA]</scope>
    <source>
        <strain>972 / ATCC 24843</strain>
    </source>
</reference>
<reference key="4">
    <citation type="journal article" date="2014" name="PLoS ONE">
        <title>Functional conservation of coenzyme Q biosynthetic genes among yeasts, plants, and humans.</title>
        <authorList>
            <person name="Hayashi K."/>
            <person name="Ogiyama Y."/>
            <person name="Yokomi K."/>
            <person name="Nakagawa T."/>
            <person name="Kaino T."/>
            <person name="Kawamukai M."/>
        </authorList>
    </citation>
    <scope>SUBCELLULAR LOCATION</scope>
    <scope>PATHWAY</scope>
</reference>
<name>COQ2_SCHPO</name>
<organism>
    <name type="scientific">Schizosaccharomyces pombe (strain 972 / ATCC 24843)</name>
    <name type="common">Fission yeast</name>
    <dbReference type="NCBI Taxonomy" id="284812"/>
    <lineage>
        <taxon>Eukaryota</taxon>
        <taxon>Fungi</taxon>
        <taxon>Dikarya</taxon>
        <taxon>Ascomycota</taxon>
        <taxon>Taphrinomycotina</taxon>
        <taxon>Schizosaccharomycetes</taxon>
        <taxon>Schizosaccharomycetales</taxon>
        <taxon>Schizosaccharomycetaceae</taxon>
        <taxon>Schizosaccharomyces</taxon>
    </lineage>
</organism>
<dbReference type="EC" id="2.5.1.39" evidence="2 3"/>
<dbReference type="EMBL" id="AB053168">
    <property type="protein sequence ID" value="BAB20425.1"/>
    <property type="molecule type" value="Genomic_DNA"/>
</dbReference>
<dbReference type="EMBL" id="DQ490018">
    <property type="protein sequence ID" value="ABF50674.1"/>
    <property type="molecule type" value="Genomic_DNA"/>
</dbReference>
<dbReference type="EMBL" id="CU329670">
    <property type="protein sequence ID" value="CAK9837431.1"/>
    <property type="molecule type" value="Genomic_DNA"/>
</dbReference>
<dbReference type="PIR" id="T38914">
    <property type="entry name" value="T38914"/>
</dbReference>
<dbReference type="SMR" id="Q10252"/>
<dbReference type="BioGRID" id="279663">
    <property type="interactions" value="5"/>
</dbReference>
<dbReference type="FunCoup" id="Q10252">
    <property type="interactions" value="237"/>
</dbReference>
<dbReference type="STRING" id="284812.Q10252"/>
<dbReference type="PaxDb" id="4896-SPAC56F8.04c.1"/>
<dbReference type="EnsemblFungi" id="SPAC56F8.04c.1">
    <property type="protein sequence ID" value="SPAC56F8.04c.1:pep"/>
    <property type="gene ID" value="SPAC56F8.04c"/>
</dbReference>
<dbReference type="PomBase" id="SPAC56F8.04c">
    <property type="gene designation" value="ppt1"/>
</dbReference>
<dbReference type="VEuPathDB" id="FungiDB:SPAC56F8.04c"/>
<dbReference type="eggNOG" id="KOG1381">
    <property type="taxonomic scope" value="Eukaryota"/>
</dbReference>
<dbReference type="HOGENOM" id="CLU_034879_0_2_1"/>
<dbReference type="InParanoid" id="Q10252"/>
<dbReference type="OMA" id="WCMIYDT"/>
<dbReference type="PhylomeDB" id="Q10252"/>
<dbReference type="BioCyc" id="MetaCyc:MONOMER-17248"/>
<dbReference type="BRENDA" id="2.5.1.39">
    <property type="organism ID" value="5613"/>
</dbReference>
<dbReference type="Reactome" id="R-SPO-2142789">
    <property type="pathway name" value="Ubiquinol biosynthesis"/>
</dbReference>
<dbReference type="UniPathway" id="UPA00232"/>
<dbReference type="PRO" id="PR:Q10252"/>
<dbReference type="Proteomes" id="UP000002485">
    <property type="component" value="Chromosome I"/>
</dbReference>
<dbReference type="GO" id="GO:0005743">
    <property type="term" value="C:mitochondrial inner membrane"/>
    <property type="evidence" value="ECO:0007669"/>
    <property type="project" value="UniProtKB-UniRule"/>
</dbReference>
<dbReference type="GO" id="GO:0005739">
    <property type="term" value="C:mitochondrion"/>
    <property type="evidence" value="ECO:0000314"/>
    <property type="project" value="PomBase"/>
</dbReference>
<dbReference type="GO" id="GO:0008412">
    <property type="term" value="F:4-hydroxybenzoate polyprenyltransferase activity"/>
    <property type="evidence" value="ECO:0007669"/>
    <property type="project" value="UniProtKB-UniRule"/>
</dbReference>
<dbReference type="GO" id="GO:0008299">
    <property type="term" value="P:isoprenoid biosynthetic process"/>
    <property type="evidence" value="ECO:0007669"/>
    <property type="project" value="UniProtKB-UniRule"/>
</dbReference>
<dbReference type="GO" id="GO:0006744">
    <property type="term" value="P:ubiquinone biosynthetic process"/>
    <property type="evidence" value="ECO:0007669"/>
    <property type="project" value="UniProtKB-UniRule"/>
</dbReference>
<dbReference type="CDD" id="cd13959">
    <property type="entry name" value="PT_UbiA_COQ2"/>
    <property type="match status" value="1"/>
</dbReference>
<dbReference type="FunFam" id="1.20.120.1780:FF:000001">
    <property type="entry name" value="4-hydroxybenzoate octaprenyltransferase"/>
    <property type="match status" value="1"/>
</dbReference>
<dbReference type="FunFam" id="1.10.357.140:FF:000003">
    <property type="entry name" value="4-hydroxybenzoate polyprenyltransferase, mitochondrial"/>
    <property type="match status" value="1"/>
</dbReference>
<dbReference type="Gene3D" id="1.10.357.140">
    <property type="entry name" value="UbiA prenyltransferase"/>
    <property type="match status" value="1"/>
</dbReference>
<dbReference type="HAMAP" id="MF_01635">
    <property type="entry name" value="UbiA"/>
    <property type="match status" value="1"/>
</dbReference>
<dbReference type="InterPro" id="IPR006370">
    <property type="entry name" value="HB_polyprenyltransferase-like"/>
</dbReference>
<dbReference type="InterPro" id="IPR039653">
    <property type="entry name" value="Prenyltransferase"/>
</dbReference>
<dbReference type="InterPro" id="IPR000537">
    <property type="entry name" value="UbiA_prenyltransferase"/>
</dbReference>
<dbReference type="InterPro" id="IPR030470">
    <property type="entry name" value="UbiA_prenylTrfase_CS"/>
</dbReference>
<dbReference type="InterPro" id="IPR044878">
    <property type="entry name" value="UbiA_sf"/>
</dbReference>
<dbReference type="NCBIfam" id="TIGR01474">
    <property type="entry name" value="ubiA_proteo"/>
    <property type="match status" value="1"/>
</dbReference>
<dbReference type="PANTHER" id="PTHR11048:SF28">
    <property type="entry name" value="4-HYDROXYBENZOATE POLYPRENYLTRANSFERASE, MITOCHONDRIAL"/>
    <property type="match status" value="1"/>
</dbReference>
<dbReference type="PANTHER" id="PTHR11048">
    <property type="entry name" value="PRENYLTRANSFERASES"/>
    <property type="match status" value="1"/>
</dbReference>
<dbReference type="Pfam" id="PF01040">
    <property type="entry name" value="UbiA"/>
    <property type="match status" value="1"/>
</dbReference>
<dbReference type="PROSITE" id="PS00943">
    <property type="entry name" value="UBIA"/>
    <property type="match status" value="1"/>
</dbReference>
<proteinExistence type="evidence at protein level"/>
<protein>
    <recommendedName>
        <fullName evidence="2">4-hydroxybenzoate polyprenyltransferase, mitochondrial</fullName>
        <shortName evidence="2">4-HB polyprenyltransferase</shortName>
        <ecNumber evidence="2 3">2.5.1.39</ecNumber>
    </recommendedName>
    <alternativeName>
        <fullName evidence="2">4-hydroxybenzoate decaprenyltransferase</fullName>
    </alternativeName>
    <alternativeName>
        <fullName evidence="2">Para-hydroxybenzoate--polyprenyltransferase</fullName>
        <shortName evidence="2">PHB:PPT</shortName>
        <shortName evidence="2">PHB:polyprenyltransferase</shortName>
    </alternativeName>
    <alternativeName>
        <fullName>p-hydroxybenzoate polyprenyl diphosphate transferase</fullName>
    </alternativeName>
</protein>
<accession>Q10252</accession>
<accession>A0AAN2L592</accession>
<accession>Q1HFZ7</accession>
<sequence length="358" mass="39454">MIIKPIASPARYFLRTPSWSAVAIFQAVKIKPLQLRTNSSNSVTPNLISPSKKSWKDLFSKRWQYYAEISRAGSPTGTYLLYSPCTWSILMAAYAYDSSLVNVTKMLALFGVGSFLMRSAGCVINDLWDRELDAKVERSKSRPLASGKLSVRQAISLLSVQLTASLGILLQLNPYTIKLGVASLVPVCIYPAMKRITYYPQVVLGLTFGYGAVMGWPALAGEACMNWSVVAPLYLSTISWIVLYDTIYAHQDKRDDVKANIYSTALRFGDNTKPVLCGLAALQIATLATAGIMNGQGPVFYTLGVAGAAYRLSSMIYKVDLDDPKDCFRWFKRNSNTGYLVAAAIALDWLAKSFIYDS</sequence>
<gene>
    <name evidence="2" type="primary">ppt1</name>
    <name type="synonym">coq2</name>
    <name evidence="6" type="ORF">SPAC56F8.04c</name>
</gene>
<comment type="function">
    <text evidence="2 3">Catalyzes the prenylation of para-hydroxybenzoate (PHB) with an all-trans polyprenyl group. Mediates the second step in the final reaction sequence of coenzyme Q (CoQ) biosynthesis, which is the condensation of the polyisoprenoid side chain with PHB, generating the first membrane-bound Q intermediate.</text>
</comment>
<comment type="catalytic activity">
    <reaction evidence="2 3">
        <text>an all-trans-polyprenyl diphosphate + 4-hydroxybenzoate = a 4-hydroxy-3-(all-trans-polyprenyl)benzoate + diphosphate</text>
        <dbReference type="Rhea" id="RHEA:44504"/>
        <dbReference type="Rhea" id="RHEA-COMP:9514"/>
        <dbReference type="Rhea" id="RHEA-COMP:9564"/>
        <dbReference type="ChEBI" id="CHEBI:17879"/>
        <dbReference type="ChEBI" id="CHEBI:33019"/>
        <dbReference type="ChEBI" id="CHEBI:58914"/>
        <dbReference type="ChEBI" id="CHEBI:78396"/>
        <dbReference type="EC" id="2.5.1.39"/>
    </reaction>
</comment>
<comment type="cofactor">
    <cofactor evidence="2">
        <name>Mg(2+)</name>
        <dbReference type="ChEBI" id="CHEBI:18420"/>
    </cofactor>
</comment>
<comment type="pathway">
    <text evidence="2 5">Cofactor biosynthesis; ubiquinone biosynthesis.</text>
</comment>
<comment type="subcellular location">
    <subcellularLocation>
        <location evidence="4">Mitochondrion</location>
    </subcellularLocation>
    <subcellularLocation>
        <location evidence="2 3">Mitochondrion inner membrane</location>
        <topology evidence="2">Multi-pass membrane protein</topology>
        <orientation evidence="2">Matrix side</orientation>
    </subcellularLocation>
</comment>
<comment type="similarity">
    <text evidence="2">Belongs to the UbiA prenyltransferase family.</text>
</comment>
<keyword id="KW-0414">Isoprene biosynthesis</keyword>
<keyword id="KW-0472">Membrane</keyword>
<keyword id="KW-0496">Mitochondrion</keyword>
<keyword id="KW-0999">Mitochondrion inner membrane</keyword>
<keyword id="KW-1185">Reference proteome</keyword>
<keyword id="KW-0808">Transferase</keyword>
<keyword id="KW-0809">Transit peptide</keyword>
<keyword id="KW-0812">Transmembrane</keyword>
<keyword id="KW-1133">Transmembrane helix</keyword>
<keyword id="KW-0831">Ubiquinone biosynthesis</keyword>
<evidence type="ECO:0000255" key="1"/>
<evidence type="ECO:0000255" key="2">
    <source>
        <dbReference type="HAMAP-Rule" id="MF_03189"/>
    </source>
</evidence>
<evidence type="ECO:0000269" key="3">
    <source>
    </source>
</evidence>
<evidence type="ECO:0000269" key="4">
    <source>
    </source>
</evidence>
<evidence type="ECO:0000305" key="5">
    <source>
    </source>
</evidence>
<evidence type="ECO:0000312" key="6">
    <source>
        <dbReference type="PomBase" id="SPAC56F8.04c"/>
    </source>
</evidence>